<protein>
    <recommendedName>
        <fullName evidence="1">Cyclic pyranopterin monophosphate synthase</fullName>
        <ecNumber evidence="1">4.6.1.17</ecNumber>
    </recommendedName>
    <alternativeName>
        <fullName evidence="1">Molybdenum cofactor biosynthesis protein C</fullName>
    </alternativeName>
</protein>
<name>MOAC_BACAA</name>
<comment type="function">
    <text evidence="1">Catalyzes the conversion of (8S)-3',8-cyclo-7,8-dihydroguanosine 5'-triphosphate to cyclic pyranopterin monophosphate (cPMP).</text>
</comment>
<comment type="catalytic activity">
    <reaction evidence="1">
        <text>(8S)-3',8-cyclo-7,8-dihydroguanosine 5'-triphosphate = cyclic pyranopterin phosphate + diphosphate</text>
        <dbReference type="Rhea" id="RHEA:49580"/>
        <dbReference type="ChEBI" id="CHEBI:33019"/>
        <dbReference type="ChEBI" id="CHEBI:59648"/>
        <dbReference type="ChEBI" id="CHEBI:131766"/>
        <dbReference type="EC" id="4.6.1.17"/>
    </reaction>
</comment>
<comment type="pathway">
    <text evidence="1">Cofactor biosynthesis; molybdopterin biosynthesis.</text>
</comment>
<comment type="subunit">
    <text evidence="1">Homohexamer; trimer of dimers.</text>
</comment>
<comment type="similarity">
    <text evidence="1">Belongs to the MoaC family.</text>
</comment>
<feature type="chain" id="PRO_1000164876" description="Cyclic pyranopterin monophosphate synthase">
    <location>
        <begin position="1"/>
        <end position="161"/>
    </location>
</feature>
<feature type="active site" evidence="1">
    <location>
        <position position="130"/>
    </location>
</feature>
<feature type="binding site" evidence="1">
    <location>
        <begin position="75"/>
        <end position="77"/>
    </location>
    <ligand>
        <name>substrate</name>
    </ligand>
</feature>
<feature type="binding site" evidence="1">
    <location>
        <begin position="115"/>
        <end position="116"/>
    </location>
    <ligand>
        <name>substrate</name>
    </ligand>
</feature>
<proteinExistence type="inferred from homology"/>
<sequence length="161" mass="17499">MSSFTHFNDQGRAKMVDISDKKATVRTAIACSSIVVTKEIYDKISHNEIGKGDVLAVAQIAGIMAAKRTSDIIPMCHPLLLKGVDVSFDWKQSDEQYRLLIEVKVKTEGSTGVEMEALTAASATALTVYDMCKAVDKGMIIGETYLLEKTGGKSGDYTRKS</sequence>
<dbReference type="EC" id="4.6.1.17" evidence="1"/>
<dbReference type="EMBL" id="CP001598">
    <property type="protein sequence ID" value="ACQ47997.1"/>
    <property type="molecule type" value="Genomic_DNA"/>
</dbReference>
<dbReference type="RefSeq" id="WP_000094141.1">
    <property type="nucleotide sequence ID" value="NC_012659.1"/>
</dbReference>
<dbReference type="SMR" id="C3PBI3"/>
<dbReference type="GeneID" id="45024593"/>
<dbReference type="KEGG" id="bai:BAA_4985"/>
<dbReference type="HOGENOM" id="CLU_074693_1_1_9"/>
<dbReference type="UniPathway" id="UPA00344"/>
<dbReference type="GO" id="GO:0061799">
    <property type="term" value="F:cyclic pyranopterin monophosphate synthase activity"/>
    <property type="evidence" value="ECO:0007669"/>
    <property type="project" value="UniProtKB-UniRule"/>
</dbReference>
<dbReference type="GO" id="GO:0006777">
    <property type="term" value="P:Mo-molybdopterin cofactor biosynthetic process"/>
    <property type="evidence" value="ECO:0007669"/>
    <property type="project" value="UniProtKB-UniRule"/>
</dbReference>
<dbReference type="CDD" id="cd01420">
    <property type="entry name" value="MoaC_PE"/>
    <property type="match status" value="1"/>
</dbReference>
<dbReference type="Gene3D" id="3.30.70.640">
    <property type="entry name" value="Molybdopterin cofactor biosynthesis C (MoaC) domain"/>
    <property type="match status" value="1"/>
</dbReference>
<dbReference type="HAMAP" id="MF_01224_B">
    <property type="entry name" value="MoaC_B"/>
    <property type="match status" value="1"/>
</dbReference>
<dbReference type="InterPro" id="IPR023045">
    <property type="entry name" value="MoaC"/>
</dbReference>
<dbReference type="InterPro" id="IPR047594">
    <property type="entry name" value="MoaC_bact/euk"/>
</dbReference>
<dbReference type="InterPro" id="IPR036522">
    <property type="entry name" value="MoaC_sf"/>
</dbReference>
<dbReference type="InterPro" id="IPR050105">
    <property type="entry name" value="MoCo_biosynth_MoaA/MoaC"/>
</dbReference>
<dbReference type="InterPro" id="IPR002820">
    <property type="entry name" value="Mopterin_CF_biosynth-C_dom"/>
</dbReference>
<dbReference type="NCBIfam" id="TIGR00581">
    <property type="entry name" value="moaC"/>
    <property type="match status" value="1"/>
</dbReference>
<dbReference type="NCBIfam" id="NF006870">
    <property type="entry name" value="PRK09364.1"/>
    <property type="match status" value="1"/>
</dbReference>
<dbReference type="PANTHER" id="PTHR22960:SF29">
    <property type="entry name" value="CYCLIC PYRANOPTERIN MONOPHOSPHATE SYNTHASE"/>
    <property type="match status" value="1"/>
</dbReference>
<dbReference type="PANTHER" id="PTHR22960">
    <property type="entry name" value="MOLYBDOPTERIN COFACTOR SYNTHESIS PROTEIN A"/>
    <property type="match status" value="1"/>
</dbReference>
<dbReference type="Pfam" id="PF01967">
    <property type="entry name" value="MoaC"/>
    <property type="match status" value="1"/>
</dbReference>
<dbReference type="SUPFAM" id="SSF55040">
    <property type="entry name" value="Molybdenum cofactor biosynthesis protein C, MoaC"/>
    <property type="match status" value="1"/>
</dbReference>
<accession>C3PBI3</accession>
<gene>
    <name evidence="1" type="primary">moaC</name>
    <name type="ordered locus">BAA_4985</name>
</gene>
<organism>
    <name type="scientific">Bacillus anthracis (strain A0248)</name>
    <dbReference type="NCBI Taxonomy" id="592021"/>
    <lineage>
        <taxon>Bacteria</taxon>
        <taxon>Bacillati</taxon>
        <taxon>Bacillota</taxon>
        <taxon>Bacilli</taxon>
        <taxon>Bacillales</taxon>
        <taxon>Bacillaceae</taxon>
        <taxon>Bacillus</taxon>
        <taxon>Bacillus cereus group</taxon>
    </lineage>
</organism>
<evidence type="ECO:0000255" key="1">
    <source>
        <dbReference type="HAMAP-Rule" id="MF_01224"/>
    </source>
</evidence>
<reference key="1">
    <citation type="submission" date="2009-04" db="EMBL/GenBank/DDBJ databases">
        <title>Genome sequence of Bacillus anthracis A0248.</title>
        <authorList>
            <person name="Dodson R.J."/>
            <person name="Munk A.C."/>
            <person name="Bruce D."/>
            <person name="Detter C."/>
            <person name="Tapia R."/>
            <person name="Sutton G."/>
            <person name="Sims D."/>
            <person name="Brettin T."/>
        </authorList>
    </citation>
    <scope>NUCLEOTIDE SEQUENCE [LARGE SCALE GENOMIC DNA]</scope>
    <source>
        <strain>A0248</strain>
    </source>
</reference>
<keyword id="KW-0456">Lyase</keyword>
<keyword id="KW-0501">Molybdenum cofactor biosynthesis</keyword>